<accession>A7H372</accession>
<protein>
    <recommendedName>
        <fullName evidence="1">tRNA modification GTPase MnmE</fullName>
        <ecNumber evidence="1">3.6.-.-</ecNumber>
    </recommendedName>
</protein>
<keyword id="KW-0963">Cytoplasm</keyword>
<keyword id="KW-0342">GTP-binding</keyword>
<keyword id="KW-0378">Hydrolase</keyword>
<keyword id="KW-0460">Magnesium</keyword>
<keyword id="KW-0479">Metal-binding</keyword>
<keyword id="KW-0547">Nucleotide-binding</keyword>
<keyword id="KW-0630">Potassium</keyword>
<keyword id="KW-0819">tRNA processing</keyword>
<feature type="chain" id="PRO_1000048809" description="tRNA modification GTPase MnmE">
    <location>
        <begin position="1"/>
        <end position="442"/>
    </location>
</feature>
<feature type="domain" description="TrmE-type G">
    <location>
        <begin position="214"/>
        <end position="367"/>
    </location>
</feature>
<feature type="binding site" evidence="1">
    <location>
        <position position="21"/>
    </location>
    <ligand>
        <name>(6S)-5-formyl-5,6,7,8-tetrahydrofolate</name>
        <dbReference type="ChEBI" id="CHEBI:57457"/>
    </ligand>
</feature>
<feature type="binding site" evidence="1">
    <location>
        <position position="79"/>
    </location>
    <ligand>
        <name>(6S)-5-formyl-5,6,7,8-tetrahydrofolate</name>
        <dbReference type="ChEBI" id="CHEBI:57457"/>
    </ligand>
</feature>
<feature type="binding site" evidence="1">
    <location>
        <position position="118"/>
    </location>
    <ligand>
        <name>(6S)-5-formyl-5,6,7,8-tetrahydrofolate</name>
        <dbReference type="ChEBI" id="CHEBI:57457"/>
    </ligand>
</feature>
<feature type="binding site" evidence="1">
    <location>
        <begin position="224"/>
        <end position="229"/>
    </location>
    <ligand>
        <name>GTP</name>
        <dbReference type="ChEBI" id="CHEBI:37565"/>
    </ligand>
</feature>
<feature type="binding site" evidence="1">
    <location>
        <position position="224"/>
    </location>
    <ligand>
        <name>K(+)</name>
        <dbReference type="ChEBI" id="CHEBI:29103"/>
    </ligand>
</feature>
<feature type="binding site" evidence="1">
    <location>
        <position position="228"/>
    </location>
    <ligand>
        <name>Mg(2+)</name>
        <dbReference type="ChEBI" id="CHEBI:18420"/>
    </ligand>
</feature>
<feature type="binding site" evidence="1">
    <location>
        <begin position="243"/>
        <end position="249"/>
    </location>
    <ligand>
        <name>GTP</name>
        <dbReference type="ChEBI" id="CHEBI:37565"/>
    </ligand>
</feature>
<feature type="binding site" evidence="1">
    <location>
        <position position="243"/>
    </location>
    <ligand>
        <name>K(+)</name>
        <dbReference type="ChEBI" id="CHEBI:29103"/>
    </ligand>
</feature>
<feature type="binding site" evidence="1">
    <location>
        <position position="245"/>
    </location>
    <ligand>
        <name>K(+)</name>
        <dbReference type="ChEBI" id="CHEBI:29103"/>
    </ligand>
</feature>
<feature type="binding site" evidence="1">
    <location>
        <position position="248"/>
    </location>
    <ligand>
        <name>K(+)</name>
        <dbReference type="ChEBI" id="CHEBI:29103"/>
    </ligand>
</feature>
<feature type="binding site" evidence="1">
    <location>
        <position position="249"/>
    </location>
    <ligand>
        <name>Mg(2+)</name>
        <dbReference type="ChEBI" id="CHEBI:18420"/>
    </ligand>
</feature>
<feature type="binding site" evidence="1">
    <location>
        <begin position="268"/>
        <end position="271"/>
    </location>
    <ligand>
        <name>GTP</name>
        <dbReference type="ChEBI" id="CHEBI:37565"/>
    </ligand>
</feature>
<feature type="binding site" evidence="1">
    <location>
        <position position="442"/>
    </location>
    <ligand>
        <name>(6S)-5-formyl-5,6,7,8-tetrahydrofolate</name>
        <dbReference type="ChEBI" id="CHEBI:57457"/>
    </ligand>
</feature>
<name>MNME_CAMJD</name>
<dbReference type="EC" id="3.6.-.-" evidence="1"/>
<dbReference type="EMBL" id="CP000768">
    <property type="protein sequence ID" value="ABS44531.1"/>
    <property type="molecule type" value="Genomic_DNA"/>
</dbReference>
<dbReference type="SMR" id="A7H372"/>
<dbReference type="KEGG" id="cjd:JJD26997_0825"/>
<dbReference type="HOGENOM" id="CLU_019624_4_1_7"/>
<dbReference type="Proteomes" id="UP000002302">
    <property type="component" value="Chromosome"/>
</dbReference>
<dbReference type="GO" id="GO:0005829">
    <property type="term" value="C:cytosol"/>
    <property type="evidence" value="ECO:0007669"/>
    <property type="project" value="TreeGrafter"/>
</dbReference>
<dbReference type="GO" id="GO:0005525">
    <property type="term" value="F:GTP binding"/>
    <property type="evidence" value="ECO:0007669"/>
    <property type="project" value="UniProtKB-UniRule"/>
</dbReference>
<dbReference type="GO" id="GO:0003924">
    <property type="term" value="F:GTPase activity"/>
    <property type="evidence" value="ECO:0007669"/>
    <property type="project" value="UniProtKB-UniRule"/>
</dbReference>
<dbReference type="GO" id="GO:0046872">
    <property type="term" value="F:metal ion binding"/>
    <property type="evidence" value="ECO:0007669"/>
    <property type="project" value="UniProtKB-KW"/>
</dbReference>
<dbReference type="GO" id="GO:0030488">
    <property type="term" value="P:tRNA methylation"/>
    <property type="evidence" value="ECO:0007669"/>
    <property type="project" value="TreeGrafter"/>
</dbReference>
<dbReference type="GO" id="GO:0002098">
    <property type="term" value="P:tRNA wobble uridine modification"/>
    <property type="evidence" value="ECO:0007669"/>
    <property type="project" value="TreeGrafter"/>
</dbReference>
<dbReference type="CDD" id="cd04164">
    <property type="entry name" value="trmE"/>
    <property type="match status" value="1"/>
</dbReference>
<dbReference type="CDD" id="cd14858">
    <property type="entry name" value="TrmE_N"/>
    <property type="match status" value="1"/>
</dbReference>
<dbReference type="FunFam" id="3.40.50.300:FF:001376">
    <property type="entry name" value="tRNA modification GTPase MnmE"/>
    <property type="match status" value="1"/>
</dbReference>
<dbReference type="Gene3D" id="3.40.50.300">
    <property type="entry name" value="P-loop containing nucleotide triphosphate hydrolases"/>
    <property type="match status" value="1"/>
</dbReference>
<dbReference type="Gene3D" id="3.30.1360.120">
    <property type="entry name" value="Probable tRNA modification gtpase trme, domain 1"/>
    <property type="match status" value="1"/>
</dbReference>
<dbReference type="Gene3D" id="1.20.120.430">
    <property type="entry name" value="tRNA modification GTPase MnmE domain 2"/>
    <property type="match status" value="1"/>
</dbReference>
<dbReference type="HAMAP" id="MF_00379">
    <property type="entry name" value="GTPase_MnmE"/>
    <property type="match status" value="1"/>
</dbReference>
<dbReference type="InterPro" id="IPR031168">
    <property type="entry name" value="G_TrmE"/>
</dbReference>
<dbReference type="InterPro" id="IPR006073">
    <property type="entry name" value="GTP-bd"/>
</dbReference>
<dbReference type="InterPro" id="IPR018948">
    <property type="entry name" value="GTP-bd_TrmE_N"/>
</dbReference>
<dbReference type="InterPro" id="IPR004520">
    <property type="entry name" value="GTPase_MnmE"/>
</dbReference>
<dbReference type="InterPro" id="IPR027368">
    <property type="entry name" value="MnmE_dom2"/>
</dbReference>
<dbReference type="InterPro" id="IPR025867">
    <property type="entry name" value="MnmE_helical"/>
</dbReference>
<dbReference type="InterPro" id="IPR027417">
    <property type="entry name" value="P-loop_NTPase"/>
</dbReference>
<dbReference type="InterPro" id="IPR005225">
    <property type="entry name" value="Small_GTP-bd"/>
</dbReference>
<dbReference type="InterPro" id="IPR027266">
    <property type="entry name" value="TrmE/GcvT_dom1"/>
</dbReference>
<dbReference type="NCBIfam" id="TIGR00450">
    <property type="entry name" value="mnmE_trmE_thdF"/>
    <property type="match status" value="1"/>
</dbReference>
<dbReference type="NCBIfam" id="TIGR00231">
    <property type="entry name" value="small_GTP"/>
    <property type="match status" value="1"/>
</dbReference>
<dbReference type="PANTHER" id="PTHR42714">
    <property type="entry name" value="TRNA MODIFICATION GTPASE GTPBP3"/>
    <property type="match status" value="1"/>
</dbReference>
<dbReference type="PANTHER" id="PTHR42714:SF2">
    <property type="entry name" value="TRNA MODIFICATION GTPASE GTPBP3, MITOCHONDRIAL"/>
    <property type="match status" value="1"/>
</dbReference>
<dbReference type="Pfam" id="PF01926">
    <property type="entry name" value="MMR_HSR1"/>
    <property type="match status" value="1"/>
</dbReference>
<dbReference type="Pfam" id="PF12631">
    <property type="entry name" value="MnmE_helical"/>
    <property type="match status" value="1"/>
</dbReference>
<dbReference type="Pfam" id="PF10396">
    <property type="entry name" value="TrmE_N"/>
    <property type="match status" value="1"/>
</dbReference>
<dbReference type="SUPFAM" id="SSF103025">
    <property type="entry name" value="Folate-binding domain"/>
    <property type="match status" value="1"/>
</dbReference>
<dbReference type="SUPFAM" id="SSF52540">
    <property type="entry name" value="P-loop containing nucleoside triphosphate hydrolases"/>
    <property type="match status" value="1"/>
</dbReference>
<dbReference type="PROSITE" id="PS51709">
    <property type="entry name" value="G_TRME"/>
    <property type="match status" value="1"/>
</dbReference>
<reference key="1">
    <citation type="submission" date="2007-07" db="EMBL/GenBank/DDBJ databases">
        <title>Complete genome sequence of Campylobacter jejuni subsp doylei 269.97 isolated from human blood.</title>
        <authorList>
            <person name="Fouts D.E."/>
            <person name="Mongodin E.F."/>
            <person name="Puiu D."/>
            <person name="Sebastian Y."/>
            <person name="Miller W.G."/>
            <person name="Mandrell R.E."/>
            <person name="Lastovica A.J."/>
            <person name="Nelson K.E."/>
        </authorList>
    </citation>
    <scope>NUCLEOTIDE SEQUENCE [LARGE SCALE GENOMIC DNA]</scope>
    <source>
        <strain>ATCC BAA-1458 / RM4099 / 269.97</strain>
    </source>
</reference>
<gene>
    <name evidence="1" type="primary">mnmE</name>
    <name evidence="1" type="synonym">trmE</name>
    <name type="ordered locus">JJD26997_0825</name>
</gene>
<proteinExistence type="inferred from homology"/>
<evidence type="ECO:0000255" key="1">
    <source>
        <dbReference type="HAMAP-Rule" id="MF_00379"/>
    </source>
</evidence>
<organism>
    <name type="scientific">Campylobacter jejuni subsp. doylei (strain ATCC BAA-1458 / RM4099 / 269.97)</name>
    <dbReference type="NCBI Taxonomy" id="360109"/>
    <lineage>
        <taxon>Bacteria</taxon>
        <taxon>Pseudomonadati</taxon>
        <taxon>Campylobacterota</taxon>
        <taxon>Epsilonproteobacteria</taxon>
        <taxon>Campylobacterales</taxon>
        <taxon>Campylobacteraceae</taxon>
        <taxon>Campylobacter</taxon>
    </lineage>
</organism>
<comment type="function">
    <text evidence="1">Exhibits a very high intrinsic GTPase hydrolysis rate. Involved in the addition of a carboxymethylaminomethyl (cmnm) group at the wobble position (U34) of certain tRNAs, forming tRNA-cmnm(5)s(2)U34.</text>
</comment>
<comment type="cofactor">
    <cofactor evidence="1">
        <name>K(+)</name>
        <dbReference type="ChEBI" id="CHEBI:29103"/>
    </cofactor>
    <text evidence="1">Binds 1 potassium ion per subunit.</text>
</comment>
<comment type="subunit">
    <text evidence="1">Homodimer. Heterotetramer of two MnmE and two MnmG subunits.</text>
</comment>
<comment type="subcellular location">
    <subcellularLocation>
        <location evidence="1">Cytoplasm</location>
    </subcellularLocation>
</comment>
<comment type="similarity">
    <text evidence="1">Belongs to the TRAFAC class TrmE-Era-EngA-EngB-Septin-like GTPase superfamily. TrmE GTPase family.</text>
</comment>
<sequence>MSDTIAAIATAHGVGSISIVRLSGERALEFALRFSRKTKLTPRHATFTKLFNQNNEIIDEAIMIYFKAPYSFTGEDIVEFQTHGGFSVSEVLLEELVSLGARFALAGEFSKRACLNGKMTPLKALNIQDLILSKSALAAKIIARNMQGNLGELLEKIRTDLVKTLAFVETSIDYADDDLPSDLLEKISTMCEENSKILKEIYTLSQSKKGLIEGFKIAIIGKPNVGKSSLLNALLSYERAIVSDIAGTTRDTIEESFKLGTHLLRIIDTAGIRESKDTIEQIGVALSKKSLEDADIILAVFDASRVQDKEDEKIFELLANTDKKIFWILNKSDLENVFKNTRNKNFIKLSAQKDIALLKEELQNYLNSFDSEGIMVSSLDLINACKISSEAIFRAKELLEESSLELFAFELNLAINELARFTKDFQRDEILDEMFGNFCLGK</sequence>